<accession>Q9X233</accession>
<reference key="1">
    <citation type="journal article" date="1999" name="Nature">
        <title>Evidence for lateral gene transfer between Archaea and Bacteria from genome sequence of Thermotoga maritima.</title>
        <authorList>
            <person name="Nelson K.E."/>
            <person name="Clayton R.A."/>
            <person name="Gill S.R."/>
            <person name="Gwinn M.L."/>
            <person name="Dodson R.J."/>
            <person name="Haft D.H."/>
            <person name="Hickey E.K."/>
            <person name="Peterson J.D."/>
            <person name="Nelson W.C."/>
            <person name="Ketchum K.A."/>
            <person name="McDonald L.A."/>
            <person name="Utterback T.R."/>
            <person name="Malek J.A."/>
            <person name="Linher K.D."/>
            <person name="Garrett M.M."/>
            <person name="Stewart A.M."/>
            <person name="Cotton M.D."/>
            <person name="Pratt M.S."/>
            <person name="Phillips C.A."/>
            <person name="Richardson D.L."/>
            <person name="Heidelberg J.F."/>
            <person name="Sutton G.G."/>
            <person name="Fleischmann R.D."/>
            <person name="Eisen J.A."/>
            <person name="White O."/>
            <person name="Salzberg S.L."/>
            <person name="Smith H.O."/>
            <person name="Venter J.C."/>
            <person name="Fraser C.M."/>
        </authorList>
    </citation>
    <scope>NUCLEOTIDE SEQUENCE [LARGE SCALE GENOMIC DNA]</scope>
    <source>
        <strain>ATCC 43589 / DSM 3109 / JCM 10099 / NBRC 100826 / MSB8</strain>
    </source>
</reference>
<keyword id="KW-0067">ATP-binding</keyword>
<keyword id="KW-0238">DNA-binding</keyword>
<keyword id="KW-0479">Metal-binding</keyword>
<keyword id="KW-0547">Nucleotide-binding</keyword>
<keyword id="KW-1185">Reference proteome</keyword>
<keyword id="KW-0678">Repressor</keyword>
<keyword id="KW-0804">Transcription</keyword>
<keyword id="KW-0805">Transcription regulation</keyword>
<keyword id="KW-0862">Zinc</keyword>
<keyword id="KW-0863">Zinc-finger</keyword>
<organism>
    <name type="scientific">Thermotoga maritima (strain ATCC 43589 / DSM 3109 / JCM 10099 / NBRC 100826 / MSB8)</name>
    <dbReference type="NCBI Taxonomy" id="243274"/>
    <lineage>
        <taxon>Bacteria</taxon>
        <taxon>Thermotogati</taxon>
        <taxon>Thermotogota</taxon>
        <taxon>Thermotogae</taxon>
        <taxon>Thermotogales</taxon>
        <taxon>Thermotogaceae</taxon>
        <taxon>Thermotoga</taxon>
    </lineage>
</organism>
<name>NRDR_THEMA</name>
<dbReference type="EMBL" id="AE000512">
    <property type="protein sequence ID" value="AAD36774.1"/>
    <property type="molecule type" value="Genomic_DNA"/>
</dbReference>
<dbReference type="PIR" id="E72221">
    <property type="entry name" value="E72221"/>
</dbReference>
<dbReference type="RefSeq" id="NP_229507.1">
    <property type="nucleotide sequence ID" value="NC_000853.1"/>
</dbReference>
<dbReference type="RefSeq" id="WP_010865386.1">
    <property type="nucleotide sequence ID" value="NC_000853.1"/>
</dbReference>
<dbReference type="SMR" id="Q9X233"/>
<dbReference type="FunCoup" id="Q9X233">
    <property type="interactions" value="188"/>
</dbReference>
<dbReference type="STRING" id="243274.TM_1707"/>
<dbReference type="PaxDb" id="243274-THEMA_05705"/>
<dbReference type="EnsemblBacteria" id="AAD36774">
    <property type="protein sequence ID" value="AAD36774"/>
    <property type="gene ID" value="TM_1707"/>
</dbReference>
<dbReference type="KEGG" id="tma:TM1707"/>
<dbReference type="PATRIC" id="fig|243274.5.peg.1724"/>
<dbReference type="eggNOG" id="COG1327">
    <property type="taxonomic scope" value="Bacteria"/>
</dbReference>
<dbReference type="InParanoid" id="Q9X233"/>
<dbReference type="OrthoDB" id="9807461at2"/>
<dbReference type="Proteomes" id="UP000008183">
    <property type="component" value="Chromosome"/>
</dbReference>
<dbReference type="GO" id="GO:0005524">
    <property type="term" value="F:ATP binding"/>
    <property type="evidence" value="ECO:0007669"/>
    <property type="project" value="UniProtKB-KW"/>
</dbReference>
<dbReference type="GO" id="GO:0003690">
    <property type="term" value="F:double-stranded DNA binding"/>
    <property type="evidence" value="ECO:0000318"/>
    <property type="project" value="GO_Central"/>
</dbReference>
<dbReference type="GO" id="GO:0008270">
    <property type="term" value="F:zinc ion binding"/>
    <property type="evidence" value="ECO:0007669"/>
    <property type="project" value="UniProtKB-UniRule"/>
</dbReference>
<dbReference type="GO" id="GO:0045892">
    <property type="term" value="P:negative regulation of DNA-templated transcription"/>
    <property type="evidence" value="ECO:0000318"/>
    <property type="project" value="GO_Central"/>
</dbReference>
<dbReference type="HAMAP" id="MF_00440">
    <property type="entry name" value="NrdR"/>
    <property type="match status" value="1"/>
</dbReference>
<dbReference type="InterPro" id="IPR005144">
    <property type="entry name" value="ATP-cone_dom"/>
</dbReference>
<dbReference type="InterPro" id="IPR055173">
    <property type="entry name" value="NrdR-like_N"/>
</dbReference>
<dbReference type="InterPro" id="IPR003796">
    <property type="entry name" value="RNR_NrdR-like"/>
</dbReference>
<dbReference type="NCBIfam" id="TIGR00244">
    <property type="entry name" value="transcriptional regulator NrdR"/>
    <property type="match status" value="1"/>
</dbReference>
<dbReference type="PANTHER" id="PTHR30455">
    <property type="entry name" value="TRANSCRIPTIONAL REPRESSOR NRDR"/>
    <property type="match status" value="1"/>
</dbReference>
<dbReference type="PANTHER" id="PTHR30455:SF2">
    <property type="entry name" value="TRANSCRIPTIONAL REPRESSOR NRDR"/>
    <property type="match status" value="1"/>
</dbReference>
<dbReference type="Pfam" id="PF03477">
    <property type="entry name" value="ATP-cone"/>
    <property type="match status" value="1"/>
</dbReference>
<dbReference type="Pfam" id="PF22811">
    <property type="entry name" value="Zn_ribbon_NrdR"/>
    <property type="match status" value="1"/>
</dbReference>
<dbReference type="PROSITE" id="PS51161">
    <property type="entry name" value="ATP_CONE"/>
    <property type="match status" value="1"/>
</dbReference>
<comment type="function">
    <text evidence="1">Negatively regulates transcription of bacterial ribonucleotide reductase nrd genes and operons by binding to NrdR-boxes.</text>
</comment>
<comment type="cofactor">
    <cofactor evidence="1">
        <name>Zn(2+)</name>
        <dbReference type="ChEBI" id="CHEBI:29105"/>
    </cofactor>
    <text evidence="1">Binds 1 zinc ion.</text>
</comment>
<comment type="similarity">
    <text evidence="1">Belongs to the NrdR family.</text>
</comment>
<protein>
    <recommendedName>
        <fullName evidence="1">Transcriptional repressor NrdR</fullName>
    </recommendedName>
</protein>
<proteinExistence type="inferred from homology"/>
<feature type="chain" id="PRO_0000182372" description="Transcriptional repressor NrdR">
    <location>
        <begin position="1"/>
        <end position="156"/>
    </location>
</feature>
<feature type="domain" description="ATP-cone" evidence="1">
    <location>
        <begin position="49"/>
        <end position="139"/>
    </location>
</feature>
<feature type="zinc finger region" evidence="1">
    <location>
        <begin position="3"/>
        <end position="34"/>
    </location>
</feature>
<evidence type="ECO:0000255" key="1">
    <source>
        <dbReference type="HAMAP-Rule" id="MF_00440"/>
    </source>
</evidence>
<sequence>MKCPFCGSMDTRVLDSRPTLDGTAIRRRRECSSCGKRFTTYERYEEAPVLVVKKDGRREKFDREKIKNGMIKACEKRPVTYEQIEEAVNRICLKLREEGSFEVETKRIGELVMEELKKLDQVAYVRLASVYRDFREVDQFLEIVKELKREKEGEEQ</sequence>
<gene>
    <name evidence="1" type="primary">nrdR</name>
    <name type="ordered locus">TM_1707</name>
</gene>